<gene>
    <name evidence="1" type="primary">dapA</name>
    <name type="ordered locus">ML1513</name>
</gene>
<dbReference type="EC" id="4.3.3.7" evidence="1"/>
<dbReference type="EMBL" id="AL583922">
    <property type="protein sequence ID" value="CAC30464.1"/>
    <property type="molecule type" value="Genomic_DNA"/>
</dbReference>
<dbReference type="PIR" id="C87098">
    <property type="entry name" value="C87098"/>
</dbReference>
<dbReference type="RefSeq" id="NP_302060.1">
    <property type="nucleotide sequence ID" value="NC_002677.1"/>
</dbReference>
<dbReference type="RefSeq" id="WP_010908381.1">
    <property type="nucleotide sequence ID" value="NC_002677.1"/>
</dbReference>
<dbReference type="SMR" id="Q9CBW4"/>
<dbReference type="STRING" id="272631.gene:17575354"/>
<dbReference type="KEGG" id="mle:ML1513"/>
<dbReference type="PATRIC" id="fig|272631.5.peg.2842"/>
<dbReference type="Leproma" id="ML1513"/>
<dbReference type="eggNOG" id="COG0329">
    <property type="taxonomic scope" value="Bacteria"/>
</dbReference>
<dbReference type="HOGENOM" id="CLU_049343_7_1_11"/>
<dbReference type="OrthoDB" id="9782828at2"/>
<dbReference type="UniPathway" id="UPA00034">
    <property type="reaction ID" value="UER00017"/>
</dbReference>
<dbReference type="Proteomes" id="UP000000806">
    <property type="component" value="Chromosome"/>
</dbReference>
<dbReference type="GO" id="GO:0005829">
    <property type="term" value="C:cytosol"/>
    <property type="evidence" value="ECO:0007669"/>
    <property type="project" value="TreeGrafter"/>
</dbReference>
<dbReference type="GO" id="GO:0008840">
    <property type="term" value="F:4-hydroxy-tetrahydrodipicolinate synthase activity"/>
    <property type="evidence" value="ECO:0007669"/>
    <property type="project" value="UniProtKB-UniRule"/>
</dbReference>
<dbReference type="GO" id="GO:0019877">
    <property type="term" value="P:diaminopimelate biosynthetic process"/>
    <property type="evidence" value="ECO:0007669"/>
    <property type="project" value="UniProtKB-UniRule"/>
</dbReference>
<dbReference type="GO" id="GO:0009089">
    <property type="term" value="P:lysine biosynthetic process via diaminopimelate"/>
    <property type="evidence" value="ECO:0007669"/>
    <property type="project" value="UniProtKB-UniRule"/>
</dbReference>
<dbReference type="CDD" id="cd00950">
    <property type="entry name" value="DHDPS"/>
    <property type="match status" value="1"/>
</dbReference>
<dbReference type="Gene3D" id="3.20.20.70">
    <property type="entry name" value="Aldolase class I"/>
    <property type="match status" value="1"/>
</dbReference>
<dbReference type="HAMAP" id="MF_00418">
    <property type="entry name" value="DapA"/>
    <property type="match status" value="1"/>
</dbReference>
<dbReference type="InterPro" id="IPR013785">
    <property type="entry name" value="Aldolase_TIM"/>
</dbReference>
<dbReference type="InterPro" id="IPR005263">
    <property type="entry name" value="DapA"/>
</dbReference>
<dbReference type="InterPro" id="IPR002220">
    <property type="entry name" value="DapA-like"/>
</dbReference>
<dbReference type="InterPro" id="IPR020625">
    <property type="entry name" value="Schiff_base-form_aldolases_AS"/>
</dbReference>
<dbReference type="InterPro" id="IPR020624">
    <property type="entry name" value="Schiff_base-form_aldolases_CS"/>
</dbReference>
<dbReference type="NCBIfam" id="TIGR00674">
    <property type="entry name" value="dapA"/>
    <property type="match status" value="1"/>
</dbReference>
<dbReference type="PANTHER" id="PTHR12128:SF66">
    <property type="entry name" value="4-HYDROXY-2-OXOGLUTARATE ALDOLASE, MITOCHONDRIAL"/>
    <property type="match status" value="1"/>
</dbReference>
<dbReference type="PANTHER" id="PTHR12128">
    <property type="entry name" value="DIHYDRODIPICOLINATE SYNTHASE"/>
    <property type="match status" value="1"/>
</dbReference>
<dbReference type="Pfam" id="PF00701">
    <property type="entry name" value="DHDPS"/>
    <property type="match status" value="1"/>
</dbReference>
<dbReference type="PIRSF" id="PIRSF001365">
    <property type="entry name" value="DHDPS"/>
    <property type="match status" value="1"/>
</dbReference>
<dbReference type="PRINTS" id="PR00146">
    <property type="entry name" value="DHPICSNTHASE"/>
</dbReference>
<dbReference type="SMART" id="SM01130">
    <property type="entry name" value="DHDPS"/>
    <property type="match status" value="1"/>
</dbReference>
<dbReference type="SUPFAM" id="SSF51569">
    <property type="entry name" value="Aldolase"/>
    <property type="match status" value="1"/>
</dbReference>
<dbReference type="PROSITE" id="PS00665">
    <property type="entry name" value="DHDPS_1"/>
    <property type="match status" value="1"/>
</dbReference>
<dbReference type="PROSITE" id="PS00666">
    <property type="entry name" value="DHDPS_2"/>
    <property type="match status" value="1"/>
</dbReference>
<sequence>MTTVGFDVPARLGTLLTAMVTPFDADGSVDTAAATRLANRLVDAGCDGLVLSGTTGESPTTTDDEKLQLLRVVLEAVGDRARVIAGAGSYDTAHSVRLVKACAGEGAHGLLVVTPYYSKPPQTGLFAHFTAVADATELPVLLYDIPGRSVVPIEPDTIRALASHPNIVGVKEAKADLYSGARIMADTGLAYYSGDDALNLPWLAVGAIGFISVISHLAAGQLRELLSAFGSGDITTARKINVAIGPLCSAMDRLGGVTMSKAGLRLQGIDVGDPRLPQMPATAEQIDELAVDMRAASVLR</sequence>
<evidence type="ECO:0000255" key="1">
    <source>
        <dbReference type="HAMAP-Rule" id="MF_00418"/>
    </source>
</evidence>
<evidence type="ECO:0000305" key="2"/>
<keyword id="KW-0028">Amino-acid biosynthesis</keyword>
<keyword id="KW-0963">Cytoplasm</keyword>
<keyword id="KW-0220">Diaminopimelate biosynthesis</keyword>
<keyword id="KW-0456">Lyase</keyword>
<keyword id="KW-0457">Lysine biosynthesis</keyword>
<keyword id="KW-1185">Reference proteome</keyword>
<keyword id="KW-0704">Schiff base</keyword>
<organism>
    <name type="scientific">Mycobacterium leprae (strain TN)</name>
    <dbReference type="NCBI Taxonomy" id="272631"/>
    <lineage>
        <taxon>Bacteria</taxon>
        <taxon>Bacillati</taxon>
        <taxon>Actinomycetota</taxon>
        <taxon>Actinomycetes</taxon>
        <taxon>Mycobacteriales</taxon>
        <taxon>Mycobacteriaceae</taxon>
        <taxon>Mycobacterium</taxon>
    </lineage>
</organism>
<name>DAPA_MYCLE</name>
<proteinExistence type="inferred from homology"/>
<accession>Q9CBW4</accession>
<feature type="chain" id="PRO_0000103127" description="4-hydroxy-tetrahydrodipicolinate synthase">
    <location>
        <begin position="1"/>
        <end position="300"/>
    </location>
</feature>
<feature type="active site" description="Proton donor/acceptor" evidence="1">
    <location>
        <position position="143"/>
    </location>
</feature>
<feature type="active site" description="Schiff-base intermediate with substrate" evidence="1">
    <location>
        <position position="171"/>
    </location>
</feature>
<feature type="binding site" evidence="1">
    <location>
        <position position="55"/>
    </location>
    <ligand>
        <name>pyruvate</name>
        <dbReference type="ChEBI" id="CHEBI:15361"/>
    </ligand>
</feature>
<feature type="binding site" evidence="1">
    <location>
        <position position="211"/>
    </location>
    <ligand>
        <name>pyruvate</name>
        <dbReference type="ChEBI" id="CHEBI:15361"/>
    </ligand>
</feature>
<feature type="site" description="Part of a proton relay during catalysis" evidence="1">
    <location>
        <position position="54"/>
    </location>
</feature>
<feature type="site" description="Part of a proton relay during catalysis" evidence="1">
    <location>
        <position position="117"/>
    </location>
</feature>
<protein>
    <recommendedName>
        <fullName evidence="1">4-hydroxy-tetrahydrodipicolinate synthase</fullName>
        <shortName evidence="1">HTPA synthase</shortName>
        <ecNumber evidence="1">4.3.3.7</ecNumber>
    </recommendedName>
</protein>
<comment type="function">
    <text evidence="1">Catalyzes the condensation of (S)-aspartate-beta-semialdehyde [(S)-ASA] and pyruvate to 4-hydroxy-tetrahydrodipicolinate (HTPA).</text>
</comment>
<comment type="catalytic activity">
    <reaction evidence="1">
        <text>L-aspartate 4-semialdehyde + pyruvate = (2S,4S)-4-hydroxy-2,3,4,5-tetrahydrodipicolinate + H2O + H(+)</text>
        <dbReference type="Rhea" id="RHEA:34171"/>
        <dbReference type="ChEBI" id="CHEBI:15361"/>
        <dbReference type="ChEBI" id="CHEBI:15377"/>
        <dbReference type="ChEBI" id="CHEBI:15378"/>
        <dbReference type="ChEBI" id="CHEBI:67139"/>
        <dbReference type="ChEBI" id="CHEBI:537519"/>
        <dbReference type="EC" id="4.3.3.7"/>
    </reaction>
</comment>
<comment type="pathway">
    <text evidence="1">Amino-acid biosynthesis; L-lysine biosynthesis via DAP pathway; (S)-tetrahydrodipicolinate from L-aspartate: step 3/4.</text>
</comment>
<comment type="subunit">
    <text evidence="1">Homotetramer; dimer of dimers.</text>
</comment>
<comment type="subcellular location">
    <subcellularLocation>
        <location evidence="1">Cytoplasm</location>
    </subcellularLocation>
</comment>
<comment type="similarity">
    <text evidence="1">Belongs to the DapA family.</text>
</comment>
<comment type="caution">
    <text evidence="2">Was originally thought to be a dihydrodipicolinate synthase (DHDPS), catalyzing the condensation of (S)-aspartate-beta-semialdehyde [(S)-ASA] and pyruvate to dihydrodipicolinate (DHDP). However, it was shown in E.coli that the product of the enzymatic reaction is not dihydrodipicolinate but in fact (4S)-4-hydroxy-2,3,4,5-tetrahydro-(2S)-dipicolinic acid (HTPA), and that the consecutive dehydration reaction leading to DHDP is not spontaneous but catalyzed by DapB.</text>
</comment>
<reference key="1">
    <citation type="journal article" date="2001" name="Nature">
        <title>Massive gene decay in the leprosy bacillus.</title>
        <authorList>
            <person name="Cole S.T."/>
            <person name="Eiglmeier K."/>
            <person name="Parkhill J."/>
            <person name="James K.D."/>
            <person name="Thomson N.R."/>
            <person name="Wheeler P.R."/>
            <person name="Honore N."/>
            <person name="Garnier T."/>
            <person name="Churcher C.M."/>
            <person name="Harris D.E."/>
            <person name="Mungall K.L."/>
            <person name="Basham D."/>
            <person name="Brown D."/>
            <person name="Chillingworth T."/>
            <person name="Connor R."/>
            <person name="Davies R.M."/>
            <person name="Devlin K."/>
            <person name="Duthoy S."/>
            <person name="Feltwell T."/>
            <person name="Fraser A."/>
            <person name="Hamlin N."/>
            <person name="Holroyd S."/>
            <person name="Hornsby T."/>
            <person name="Jagels K."/>
            <person name="Lacroix C."/>
            <person name="Maclean J."/>
            <person name="Moule S."/>
            <person name="Murphy L.D."/>
            <person name="Oliver K."/>
            <person name="Quail M.A."/>
            <person name="Rajandream M.A."/>
            <person name="Rutherford K.M."/>
            <person name="Rutter S."/>
            <person name="Seeger K."/>
            <person name="Simon S."/>
            <person name="Simmonds M."/>
            <person name="Skelton J."/>
            <person name="Squares R."/>
            <person name="Squares S."/>
            <person name="Stevens K."/>
            <person name="Taylor K."/>
            <person name="Whitehead S."/>
            <person name="Woodward J.R."/>
            <person name="Barrell B.G."/>
        </authorList>
    </citation>
    <scope>NUCLEOTIDE SEQUENCE [LARGE SCALE GENOMIC DNA]</scope>
    <source>
        <strain>TN</strain>
    </source>
</reference>